<name>H2A14_CYRHA</name>
<comment type="function">
    <text evidence="1">Postsynaptic neurotoxin.</text>
</comment>
<comment type="subcellular location">
    <subcellularLocation>
        <location>Secreted</location>
    </subcellularLocation>
</comment>
<comment type="tissue specificity">
    <text>Expressed by the venom gland.</text>
</comment>
<comment type="similarity">
    <text evidence="3">Belongs to the neurotoxin 12 (Hwtx-2) family. 02 (Hwtx-2) subfamily.</text>
</comment>
<organism>
    <name type="scientific">Cyriopagopus hainanus</name>
    <name type="common">Chinese bird spider</name>
    <name type="synonym">Haplopelma hainanum</name>
    <dbReference type="NCBI Taxonomy" id="209901"/>
    <lineage>
        <taxon>Eukaryota</taxon>
        <taxon>Metazoa</taxon>
        <taxon>Ecdysozoa</taxon>
        <taxon>Arthropoda</taxon>
        <taxon>Chelicerata</taxon>
        <taxon>Arachnida</taxon>
        <taxon>Araneae</taxon>
        <taxon>Mygalomorphae</taxon>
        <taxon>Theraphosidae</taxon>
        <taxon>Haplopelma</taxon>
    </lineage>
</organism>
<protein>
    <recommendedName>
        <fullName>U4-theraphotoxin-Hhn1a</fullName>
        <shortName>U4-TRTX-Hhn1a</shortName>
    </recommendedName>
    <alternativeName>
        <fullName>Hainantoxin-II.14</fullName>
        <shortName>HNTX-II.14</shortName>
    </alternativeName>
    <alternativeName>
        <fullName>Peptide F8-20.15</fullName>
    </alternativeName>
</protein>
<sequence>MKVTLIAIPTCAAVLVLHTTAAEELEESQLMEVGMPDTELAAVDEERLFECSVSCEIEKEGNKDCKKKKCKGGWKCKFNMCVKV</sequence>
<feature type="signal peptide" evidence="2">
    <location>
        <begin position="1"/>
        <end position="22"/>
    </location>
</feature>
<feature type="propeptide" id="PRO_0000400743">
    <location>
        <begin position="23"/>
        <end position="47"/>
    </location>
</feature>
<feature type="peptide" id="PRO_0000400744" description="U4-theraphotoxin-Hhn1a">
    <location>
        <begin position="48"/>
        <end position="84"/>
    </location>
</feature>
<feature type="disulfide bond" evidence="1">
    <location>
        <begin position="51"/>
        <end position="65"/>
    </location>
</feature>
<feature type="disulfide bond" evidence="1">
    <location>
        <begin position="55"/>
        <end position="76"/>
    </location>
</feature>
<feature type="disulfide bond" evidence="1">
    <location>
        <begin position="70"/>
        <end position="81"/>
    </location>
</feature>
<accession>D2Y2D6</accession>
<dbReference type="EMBL" id="GU293013">
    <property type="protein sequence ID" value="ADB56829.1"/>
    <property type="molecule type" value="mRNA"/>
</dbReference>
<dbReference type="SMR" id="D2Y2D6"/>
<dbReference type="ArachnoServer" id="AS001783">
    <property type="toxin name" value="U4-theraphotoxin-Hhn1a"/>
</dbReference>
<dbReference type="GO" id="GO:0005576">
    <property type="term" value="C:extracellular region"/>
    <property type="evidence" value="ECO:0007669"/>
    <property type="project" value="UniProtKB-SubCell"/>
</dbReference>
<dbReference type="GO" id="GO:0035792">
    <property type="term" value="C:host cell postsynaptic membrane"/>
    <property type="evidence" value="ECO:0007669"/>
    <property type="project" value="UniProtKB-KW"/>
</dbReference>
<dbReference type="GO" id="GO:0090729">
    <property type="term" value="F:toxin activity"/>
    <property type="evidence" value="ECO:0007669"/>
    <property type="project" value="UniProtKB-KW"/>
</dbReference>
<dbReference type="InterPro" id="IPR012625">
    <property type="entry name" value="Hwtx-2-like"/>
</dbReference>
<dbReference type="Pfam" id="PF08089">
    <property type="entry name" value="Toxin_20"/>
    <property type="match status" value="1"/>
</dbReference>
<dbReference type="SUPFAM" id="SSF57059">
    <property type="entry name" value="omega toxin-like"/>
    <property type="match status" value="1"/>
</dbReference>
<dbReference type="PROSITE" id="PS60022">
    <property type="entry name" value="HWTX_2"/>
    <property type="match status" value="1"/>
</dbReference>
<evidence type="ECO:0000250" key="1"/>
<evidence type="ECO:0000255" key="2"/>
<evidence type="ECO:0000305" key="3"/>
<keyword id="KW-0903">Direct protein sequencing</keyword>
<keyword id="KW-1015">Disulfide bond</keyword>
<keyword id="KW-0528">Neurotoxin</keyword>
<keyword id="KW-0629">Postsynaptic neurotoxin</keyword>
<keyword id="KW-0964">Secreted</keyword>
<keyword id="KW-0732">Signal</keyword>
<keyword id="KW-0800">Toxin</keyword>
<reference key="1">
    <citation type="journal article" date="2010" name="J. Proteome Res.">
        <title>Molecular diversification of peptide toxins from the tarantula Haplopelma hainanum (Ornithoctonus hainana) venom based on transcriptomic, peptidomic, and genomic analyses.</title>
        <authorList>
            <person name="Tang X."/>
            <person name="Zhang Y."/>
            <person name="Hu W."/>
            <person name="Xu D."/>
            <person name="Tao H."/>
            <person name="Yang X."/>
            <person name="Li Y."/>
            <person name="Jiang L."/>
            <person name="Liang S."/>
        </authorList>
    </citation>
    <scope>NUCLEOTIDE SEQUENCE [LARGE SCALE MRNA]</scope>
    <scope>PROTEIN SEQUENCE OF 49-85</scope>
    <scope>IDENTIFICATION BY MASS SPECTROMETRY</scope>
    <source>
        <tissue>Venom</tissue>
        <tissue>Venom gland</tissue>
    </source>
</reference>
<proteinExistence type="evidence at protein level"/>